<keyword id="KW-0997">Cell inner membrane</keyword>
<keyword id="KW-1003">Cell membrane</keyword>
<keyword id="KW-0350">Heme biosynthesis</keyword>
<keyword id="KW-0472">Membrane</keyword>
<keyword id="KW-0808">Transferase</keyword>
<keyword id="KW-0812">Transmembrane</keyword>
<keyword id="KW-1133">Transmembrane helix</keyword>
<reference key="1">
    <citation type="submission" date="2006-12" db="EMBL/GenBank/DDBJ databases">
        <title>Complete sequence of Shewanella sp. W3-18-1.</title>
        <authorList>
            <consortium name="US DOE Joint Genome Institute"/>
            <person name="Copeland A."/>
            <person name="Lucas S."/>
            <person name="Lapidus A."/>
            <person name="Barry K."/>
            <person name="Detter J.C."/>
            <person name="Glavina del Rio T."/>
            <person name="Hammon N."/>
            <person name="Israni S."/>
            <person name="Dalin E."/>
            <person name="Tice H."/>
            <person name="Pitluck S."/>
            <person name="Chain P."/>
            <person name="Malfatti S."/>
            <person name="Shin M."/>
            <person name="Vergez L."/>
            <person name="Schmutz J."/>
            <person name="Larimer F."/>
            <person name="Land M."/>
            <person name="Hauser L."/>
            <person name="Kyrpides N."/>
            <person name="Lykidis A."/>
            <person name="Tiedje J."/>
            <person name="Richardson P."/>
        </authorList>
    </citation>
    <scope>NUCLEOTIDE SEQUENCE [LARGE SCALE GENOMIC DNA]</scope>
    <source>
        <strain>W3-18-1</strain>
    </source>
</reference>
<feature type="chain" id="PRO_0000326956" description="Protoheme IX farnesyltransferase 1">
    <location>
        <begin position="1"/>
        <end position="315"/>
    </location>
</feature>
<feature type="transmembrane region" description="Helical" evidence="1">
    <location>
        <begin position="25"/>
        <end position="45"/>
    </location>
</feature>
<feature type="transmembrane region" description="Helical" evidence="1">
    <location>
        <begin position="49"/>
        <end position="69"/>
    </location>
</feature>
<feature type="transmembrane region" description="Helical" evidence="1">
    <location>
        <begin position="87"/>
        <end position="107"/>
    </location>
</feature>
<feature type="transmembrane region" description="Helical" evidence="1">
    <location>
        <begin position="120"/>
        <end position="139"/>
    </location>
</feature>
<feature type="transmembrane region" description="Helical" evidence="1">
    <location>
        <begin position="145"/>
        <end position="165"/>
    </location>
</feature>
<feature type="transmembrane region" description="Helical" evidence="1">
    <location>
        <begin position="176"/>
        <end position="196"/>
    </location>
</feature>
<feature type="transmembrane region" description="Helical" evidence="1">
    <location>
        <begin position="220"/>
        <end position="240"/>
    </location>
</feature>
<feature type="transmembrane region" description="Helical" evidence="1">
    <location>
        <begin position="242"/>
        <end position="262"/>
    </location>
</feature>
<feature type="transmembrane region" description="Helical" evidence="1">
    <location>
        <begin position="280"/>
        <end position="300"/>
    </location>
</feature>
<organism>
    <name type="scientific">Shewanella sp. (strain W3-18-1)</name>
    <dbReference type="NCBI Taxonomy" id="351745"/>
    <lineage>
        <taxon>Bacteria</taxon>
        <taxon>Pseudomonadati</taxon>
        <taxon>Pseudomonadota</taxon>
        <taxon>Gammaproteobacteria</taxon>
        <taxon>Alteromonadales</taxon>
        <taxon>Shewanellaceae</taxon>
        <taxon>Shewanella</taxon>
    </lineage>
</organism>
<dbReference type="EC" id="2.5.1.141" evidence="1"/>
<dbReference type="EMBL" id="CP000503">
    <property type="protein sequence ID" value="ABM22944.1"/>
    <property type="molecule type" value="Genomic_DNA"/>
</dbReference>
<dbReference type="RefSeq" id="WP_011787511.1">
    <property type="nucleotide sequence ID" value="NC_008750.1"/>
</dbReference>
<dbReference type="SMR" id="A1RE49"/>
<dbReference type="KEGG" id="shw:Sputw3181_0091"/>
<dbReference type="HOGENOM" id="CLU_029631_0_0_6"/>
<dbReference type="UniPathway" id="UPA00834">
    <property type="reaction ID" value="UER00712"/>
</dbReference>
<dbReference type="Proteomes" id="UP000002597">
    <property type="component" value="Chromosome"/>
</dbReference>
<dbReference type="GO" id="GO:0005886">
    <property type="term" value="C:plasma membrane"/>
    <property type="evidence" value="ECO:0007669"/>
    <property type="project" value="UniProtKB-SubCell"/>
</dbReference>
<dbReference type="GO" id="GO:0008495">
    <property type="term" value="F:protoheme IX farnesyltransferase activity"/>
    <property type="evidence" value="ECO:0007669"/>
    <property type="project" value="UniProtKB-UniRule"/>
</dbReference>
<dbReference type="GO" id="GO:0048034">
    <property type="term" value="P:heme O biosynthetic process"/>
    <property type="evidence" value="ECO:0007669"/>
    <property type="project" value="UniProtKB-UniRule"/>
</dbReference>
<dbReference type="CDD" id="cd13957">
    <property type="entry name" value="PT_UbiA_Cox10"/>
    <property type="match status" value="1"/>
</dbReference>
<dbReference type="FunFam" id="1.10.357.140:FF:000001">
    <property type="entry name" value="Protoheme IX farnesyltransferase"/>
    <property type="match status" value="1"/>
</dbReference>
<dbReference type="Gene3D" id="1.10.357.140">
    <property type="entry name" value="UbiA prenyltransferase"/>
    <property type="match status" value="1"/>
</dbReference>
<dbReference type="HAMAP" id="MF_00154">
    <property type="entry name" value="CyoE_CtaB"/>
    <property type="match status" value="1"/>
</dbReference>
<dbReference type="InterPro" id="IPR006369">
    <property type="entry name" value="Protohaem_IX_farnesylTrfase"/>
</dbReference>
<dbReference type="InterPro" id="IPR000537">
    <property type="entry name" value="UbiA_prenyltransferase"/>
</dbReference>
<dbReference type="InterPro" id="IPR030470">
    <property type="entry name" value="UbiA_prenylTrfase_CS"/>
</dbReference>
<dbReference type="InterPro" id="IPR044878">
    <property type="entry name" value="UbiA_sf"/>
</dbReference>
<dbReference type="NCBIfam" id="TIGR01473">
    <property type="entry name" value="cyoE_ctaB"/>
    <property type="match status" value="1"/>
</dbReference>
<dbReference type="NCBIfam" id="NF003348">
    <property type="entry name" value="PRK04375.1-1"/>
    <property type="match status" value="1"/>
</dbReference>
<dbReference type="PANTHER" id="PTHR43448">
    <property type="entry name" value="PROTOHEME IX FARNESYLTRANSFERASE, MITOCHONDRIAL"/>
    <property type="match status" value="1"/>
</dbReference>
<dbReference type="PANTHER" id="PTHR43448:SF2">
    <property type="entry name" value="PROTOHEME IX FARNESYLTRANSFERASE, MITOCHONDRIAL"/>
    <property type="match status" value="1"/>
</dbReference>
<dbReference type="Pfam" id="PF01040">
    <property type="entry name" value="UbiA"/>
    <property type="match status" value="1"/>
</dbReference>
<dbReference type="PROSITE" id="PS00943">
    <property type="entry name" value="UBIA"/>
    <property type="match status" value="1"/>
</dbReference>
<accession>A1RE49</accession>
<proteinExistence type="inferred from homology"/>
<sequence length="315" mass="33920">MYTQDRFMSPQYKARFKGYVQVTKPGIIFGNLISVAGGFLLAAKGDVNLALMLASLVGLSLVVASGCAVNNCIDRDIDAKMQRTCKRVTVTGEIAVGNVLAFGLALGVLGFSILALFTNALALLFAVIGYIVYVGVYSLYMKRNSVYGTLVGSFSGAVPPVVGYCSVTGQMDMGAAILLLMFSLWQMPHSYAIAIFRFNDYAAANIPVLPVAEGMTKAKLHIVLYIAVFALVSALLPLAGYTGIAFMAVTCATSLWWLAMALKGYRHGVDIQRWARQVFGFSIITIMALSITMALDSQVIKEQVIGQTNLFTLVK</sequence>
<name>CYOE1_SHESW</name>
<gene>
    <name evidence="1" type="primary">cyoE1</name>
    <name type="ordered locus">Sputw3181_0091</name>
</gene>
<protein>
    <recommendedName>
        <fullName evidence="1">Protoheme IX farnesyltransferase 1</fullName>
        <ecNumber evidence="1">2.5.1.141</ecNumber>
    </recommendedName>
    <alternativeName>
        <fullName evidence="1">Heme B farnesyltransferase 1</fullName>
    </alternativeName>
    <alternativeName>
        <fullName evidence="1">Heme O synthase 1</fullName>
    </alternativeName>
</protein>
<comment type="function">
    <text evidence="1">Converts heme B (protoheme IX) to heme O by substitution of the vinyl group on carbon 2 of heme B porphyrin ring with a hydroxyethyl farnesyl side group.</text>
</comment>
<comment type="catalytic activity">
    <reaction evidence="1">
        <text>heme b + (2E,6E)-farnesyl diphosphate + H2O = Fe(II)-heme o + diphosphate</text>
        <dbReference type="Rhea" id="RHEA:28070"/>
        <dbReference type="ChEBI" id="CHEBI:15377"/>
        <dbReference type="ChEBI" id="CHEBI:33019"/>
        <dbReference type="ChEBI" id="CHEBI:60344"/>
        <dbReference type="ChEBI" id="CHEBI:60530"/>
        <dbReference type="ChEBI" id="CHEBI:175763"/>
        <dbReference type="EC" id="2.5.1.141"/>
    </reaction>
</comment>
<comment type="pathway">
    <text evidence="1">Porphyrin-containing compound metabolism; heme O biosynthesis; heme O from protoheme: step 1/1.</text>
</comment>
<comment type="subcellular location">
    <subcellularLocation>
        <location evidence="1">Cell inner membrane</location>
        <topology evidence="1">Multi-pass membrane protein</topology>
    </subcellularLocation>
</comment>
<comment type="miscellaneous">
    <text evidence="1">Carbon 2 of the heme B porphyrin ring is defined according to the Fischer nomenclature.</text>
</comment>
<comment type="similarity">
    <text evidence="1">Belongs to the UbiA prenyltransferase family. Protoheme IX farnesyltransferase subfamily.</text>
</comment>
<evidence type="ECO:0000255" key="1">
    <source>
        <dbReference type="HAMAP-Rule" id="MF_00154"/>
    </source>
</evidence>